<organism>
    <name type="scientific">Danio rerio</name>
    <name type="common">Zebrafish</name>
    <name type="synonym">Brachydanio rerio</name>
    <dbReference type="NCBI Taxonomy" id="7955"/>
    <lineage>
        <taxon>Eukaryota</taxon>
        <taxon>Metazoa</taxon>
        <taxon>Chordata</taxon>
        <taxon>Craniata</taxon>
        <taxon>Vertebrata</taxon>
        <taxon>Euteleostomi</taxon>
        <taxon>Actinopterygii</taxon>
        <taxon>Neopterygii</taxon>
        <taxon>Teleostei</taxon>
        <taxon>Ostariophysi</taxon>
        <taxon>Cypriniformes</taxon>
        <taxon>Danionidae</taxon>
        <taxon>Danioninae</taxon>
        <taxon>Danio</taxon>
    </lineage>
</organism>
<keyword id="KW-0963">Cytoplasm</keyword>
<keyword id="KW-1015">Disulfide bond</keyword>
<keyword id="KW-0340">Growth factor binding</keyword>
<keyword id="KW-0378">Hydrolase</keyword>
<keyword id="KW-0645">Protease</keyword>
<keyword id="KW-1185">Reference proteome</keyword>
<keyword id="KW-0964">Secreted</keyword>
<keyword id="KW-0720">Serine protease</keyword>
<keyword id="KW-0732">Signal</keyword>
<protein>
    <recommendedName>
        <fullName>Serine protease HTRA1A</fullName>
        <ecNumber>3.4.21.-</ecNumber>
    </recommendedName>
    <alternativeName>
        <fullName>High-temperature requirement A serine peptidase 1A</fullName>
    </alternativeName>
    <alternativeName>
        <fullName>Serine protease 11</fullName>
    </alternativeName>
</protein>
<comment type="function">
    <text evidence="1">Serine protease with a variety of targets, including extracellular matrix proteins and proteoglycans. Through cleavage of proteoglycans, may release soluble FGF-glycosaminoglycan complexes that promote the range and intensity of FGF signals in the extracellular space. Regulates the availability of insulin-like growth factors (IGFs) by cleaving IGF-binding proteins. Inhibits signaling mediated by TGF-beta family members. Consequently, may regulate many physiological processes. Intracellularly, degrades TSC2, leading to the activation of TSC2 downstream targets (By similarity).</text>
</comment>
<comment type="subunit">
    <text evidence="1">Forms homotrimers. In the presence of substrate, may form higher-order multimers in a PDZ-independent manner.</text>
</comment>
<comment type="subcellular location">
    <subcellularLocation>
        <location evidence="1">Secreted</location>
    </subcellularLocation>
    <subcellularLocation>
        <location evidence="1">Cytoplasm</location>
        <location evidence="1">Cytosol</location>
    </subcellularLocation>
    <text evidence="1">Also found associated with the plasma membrane.</text>
</comment>
<comment type="similarity">
    <text evidence="7">Belongs to the peptidase S1C family.</text>
</comment>
<name>HTR1A_DANRE</name>
<evidence type="ECO:0000250" key="1"/>
<evidence type="ECO:0000250" key="2">
    <source>
        <dbReference type="UniProtKB" id="Q92743"/>
    </source>
</evidence>
<evidence type="ECO:0000255" key="3"/>
<evidence type="ECO:0000255" key="4">
    <source>
        <dbReference type="PROSITE-ProRule" id="PRU00143"/>
    </source>
</evidence>
<evidence type="ECO:0000255" key="5">
    <source>
        <dbReference type="PROSITE-ProRule" id="PRU00653"/>
    </source>
</evidence>
<evidence type="ECO:0000255" key="6">
    <source>
        <dbReference type="PROSITE-ProRule" id="PRU00798"/>
    </source>
</evidence>
<evidence type="ECO:0000305" key="7"/>
<gene>
    <name type="primary">htra1a</name>
    <name type="synonym">htra1</name>
    <name type="synonym">prss11</name>
    <name type="ORF">zgc:92029</name>
</gene>
<reference key="1">
    <citation type="journal article" date="2013" name="Nature">
        <title>The zebrafish reference genome sequence and its relationship to the human genome.</title>
        <authorList>
            <person name="Howe K."/>
            <person name="Clark M.D."/>
            <person name="Torroja C.F."/>
            <person name="Torrance J."/>
            <person name="Berthelot C."/>
            <person name="Muffato M."/>
            <person name="Collins J.E."/>
            <person name="Humphray S."/>
            <person name="McLaren K."/>
            <person name="Matthews L."/>
            <person name="McLaren S."/>
            <person name="Sealy I."/>
            <person name="Caccamo M."/>
            <person name="Churcher C."/>
            <person name="Scott C."/>
            <person name="Barrett J.C."/>
            <person name="Koch R."/>
            <person name="Rauch G.J."/>
            <person name="White S."/>
            <person name="Chow W."/>
            <person name="Kilian B."/>
            <person name="Quintais L.T."/>
            <person name="Guerra-Assuncao J.A."/>
            <person name="Zhou Y."/>
            <person name="Gu Y."/>
            <person name="Yen J."/>
            <person name="Vogel J.H."/>
            <person name="Eyre T."/>
            <person name="Redmond S."/>
            <person name="Banerjee R."/>
            <person name="Chi J."/>
            <person name="Fu B."/>
            <person name="Langley E."/>
            <person name="Maguire S.F."/>
            <person name="Laird G.K."/>
            <person name="Lloyd D."/>
            <person name="Kenyon E."/>
            <person name="Donaldson S."/>
            <person name="Sehra H."/>
            <person name="Almeida-King J."/>
            <person name="Loveland J."/>
            <person name="Trevanion S."/>
            <person name="Jones M."/>
            <person name="Quail M."/>
            <person name="Willey D."/>
            <person name="Hunt A."/>
            <person name="Burton J."/>
            <person name="Sims S."/>
            <person name="McLay K."/>
            <person name="Plumb B."/>
            <person name="Davis J."/>
            <person name="Clee C."/>
            <person name="Oliver K."/>
            <person name="Clark R."/>
            <person name="Riddle C."/>
            <person name="Elliot D."/>
            <person name="Threadgold G."/>
            <person name="Harden G."/>
            <person name="Ware D."/>
            <person name="Begum S."/>
            <person name="Mortimore B."/>
            <person name="Kerry G."/>
            <person name="Heath P."/>
            <person name="Phillimore B."/>
            <person name="Tracey A."/>
            <person name="Corby N."/>
            <person name="Dunn M."/>
            <person name="Johnson C."/>
            <person name="Wood J."/>
            <person name="Clark S."/>
            <person name="Pelan S."/>
            <person name="Griffiths G."/>
            <person name="Smith M."/>
            <person name="Glithero R."/>
            <person name="Howden P."/>
            <person name="Barker N."/>
            <person name="Lloyd C."/>
            <person name="Stevens C."/>
            <person name="Harley J."/>
            <person name="Holt K."/>
            <person name="Panagiotidis G."/>
            <person name="Lovell J."/>
            <person name="Beasley H."/>
            <person name="Henderson C."/>
            <person name="Gordon D."/>
            <person name="Auger K."/>
            <person name="Wright D."/>
            <person name="Collins J."/>
            <person name="Raisen C."/>
            <person name="Dyer L."/>
            <person name="Leung K."/>
            <person name="Robertson L."/>
            <person name="Ambridge K."/>
            <person name="Leongamornlert D."/>
            <person name="McGuire S."/>
            <person name="Gilderthorp R."/>
            <person name="Griffiths C."/>
            <person name="Manthravadi D."/>
            <person name="Nichol S."/>
            <person name="Barker G."/>
            <person name="Whitehead S."/>
            <person name="Kay M."/>
            <person name="Brown J."/>
            <person name="Murnane C."/>
            <person name="Gray E."/>
            <person name="Humphries M."/>
            <person name="Sycamore N."/>
            <person name="Barker D."/>
            <person name="Saunders D."/>
            <person name="Wallis J."/>
            <person name="Babbage A."/>
            <person name="Hammond S."/>
            <person name="Mashreghi-Mohammadi M."/>
            <person name="Barr L."/>
            <person name="Martin S."/>
            <person name="Wray P."/>
            <person name="Ellington A."/>
            <person name="Matthews N."/>
            <person name="Ellwood M."/>
            <person name="Woodmansey R."/>
            <person name="Clark G."/>
            <person name="Cooper J."/>
            <person name="Tromans A."/>
            <person name="Grafham D."/>
            <person name="Skuce C."/>
            <person name="Pandian R."/>
            <person name="Andrews R."/>
            <person name="Harrison E."/>
            <person name="Kimberley A."/>
            <person name="Garnett J."/>
            <person name="Fosker N."/>
            <person name="Hall R."/>
            <person name="Garner P."/>
            <person name="Kelly D."/>
            <person name="Bird C."/>
            <person name="Palmer S."/>
            <person name="Gehring I."/>
            <person name="Berger A."/>
            <person name="Dooley C.M."/>
            <person name="Ersan-Urun Z."/>
            <person name="Eser C."/>
            <person name="Geiger H."/>
            <person name="Geisler M."/>
            <person name="Karotki L."/>
            <person name="Kirn A."/>
            <person name="Konantz J."/>
            <person name="Konantz M."/>
            <person name="Oberlander M."/>
            <person name="Rudolph-Geiger S."/>
            <person name="Teucke M."/>
            <person name="Lanz C."/>
            <person name="Raddatz G."/>
            <person name="Osoegawa K."/>
            <person name="Zhu B."/>
            <person name="Rapp A."/>
            <person name="Widaa S."/>
            <person name="Langford C."/>
            <person name="Yang F."/>
            <person name="Schuster S.C."/>
            <person name="Carter N.P."/>
            <person name="Harrow J."/>
            <person name="Ning Z."/>
            <person name="Herrero J."/>
            <person name="Searle S.M."/>
            <person name="Enright A."/>
            <person name="Geisler R."/>
            <person name="Plasterk R.H."/>
            <person name="Lee C."/>
            <person name="Westerfield M."/>
            <person name="de Jong P.J."/>
            <person name="Zon L.I."/>
            <person name="Postlethwait J.H."/>
            <person name="Nusslein-Volhard C."/>
            <person name="Hubbard T.J."/>
            <person name="Roest Crollius H."/>
            <person name="Rogers J."/>
            <person name="Stemple D.L."/>
        </authorList>
    </citation>
    <scope>NUCLEOTIDE SEQUENCE [LARGE SCALE GENOMIC DNA]</scope>
    <source>
        <strain>Tuebingen</strain>
    </source>
</reference>
<reference key="2">
    <citation type="submission" date="2004-06" db="EMBL/GenBank/DDBJ databases">
        <authorList>
            <consortium name="NIH - Zebrafish Gene Collection (ZGC) project"/>
        </authorList>
    </citation>
    <scope>NUCLEOTIDE SEQUENCE [LARGE SCALE MRNA]</scope>
</reference>
<dbReference type="EC" id="3.4.21.-"/>
<dbReference type="EMBL" id="AL773596">
    <property type="status" value="NOT_ANNOTATED_CDS"/>
    <property type="molecule type" value="Genomic_DNA"/>
</dbReference>
<dbReference type="EMBL" id="BX511271">
    <property type="status" value="NOT_ANNOTATED_CDS"/>
    <property type="molecule type" value="Genomic_DNA"/>
</dbReference>
<dbReference type="EMBL" id="BC074069">
    <property type="protein sequence ID" value="AAH74069.1"/>
    <property type="molecule type" value="mRNA"/>
</dbReference>
<dbReference type="RefSeq" id="NP_001002219.1">
    <property type="nucleotide sequence ID" value="NM_001002219.1"/>
</dbReference>
<dbReference type="SMR" id="Q6GMI0"/>
<dbReference type="FunCoup" id="Q6GMI0">
    <property type="interactions" value="110"/>
</dbReference>
<dbReference type="STRING" id="7955.ENSDARP00000048135"/>
<dbReference type="MEROPS" id="S01.284"/>
<dbReference type="PaxDb" id="7955-ENSDARP00000048135"/>
<dbReference type="Ensembl" id="ENSDART00000048136">
    <property type="protein sequence ID" value="ENSDARP00000048135"/>
    <property type="gene ID" value="ENSDARG00000032831"/>
</dbReference>
<dbReference type="GeneID" id="431766"/>
<dbReference type="KEGG" id="dre:431766"/>
<dbReference type="AGR" id="ZFIN:ZDB-GENE-040704-64"/>
<dbReference type="CTD" id="431766"/>
<dbReference type="ZFIN" id="ZDB-GENE-040704-64">
    <property type="gene designation" value="htra1a"/>
</dbReference>
<dbReference type="eggNOG" id="KOG1320">
    <property type="taxonomic scope" value="Eukaryota"/>
</dbReference>
<dbReference type="HOGENOM" id="CLU_020120_6_2_1"/>
<dbReference type="InParanoid" id="Q6GMI0"/>
<dbReference type="OMA" id="MFWSLLC"/>
<dbReference type="OrthoDB" id="4217619at2759"/>
<dbReference type="PhylomeDB" id="Q6GMI0"/>
<dbReference type="TreeFam" id="TF323480"/>
<dbReference type="PRO" id="PR:Q6GMI0"/>
<dbReference type="Proteomes" id="UP000000437">
    <property type="component" value="Alternate scaffold 17"/>
</dbReference>
<dbReference type="Proteomes" id="UP000000437">
    <property type="component" value="Chromosome 17"/>
</dbReference>
<dbReference type="Bgee" id="ENSDARG00000032831">
    <property type="expression patterns" value="Expressed in swim bladder and 16 other cell types or tissues"/>
</dbReference>
<dbReference type="ExpressionAtlas" id="Q6GMI0">
    <property type="expression patterns" value="baseline"/>
</dbReference>
<dbReference type="GO" id="GO:0062023">
    <property type="term" value="C:collagen-containing extracellular matrix"/>
    <property type="evidence" value="ECO:0000318"/>
    <property type="project" value="GO_Central"/>
</dbReference>
<dbReference type="GO" id="GO:0005829">
    <property type="term" value="C:cytosol"/>
    <property type="evidence" value="ECO:0007669"/>
    <property type="project" value="UniProtKB-SubCell"/>
</dbReference>
<dbReference type="GO" id="GO:0005576">
    <property type="term" value="C:extracellular region"/>
    <property type="evidence" value="ECO:0007669"/>
    <property type="project" value="UniProtKB-SubCell"/>
</dbReference>
<dbReference type="GO" id="GO:0019838">
    <property type="term" value="F:growth factor binding"/>
    <property type="evidence" value="ECO:0007669"/>
    <property type="project" value="UniProtKB-KW"/>
</dbReference>
<dbReference type="GO" id="GO:0004252">
    <property type="term" value="F:serine-type endopeptidase activity"/>
    <property type="evidence" value="ECO:0000318"/>
    <property type="project" value="GO_Central"/>
</dbReference>
<dbReference type="GO" id="GO:0043065">
    <property type="term" value="P:positive regulation of apoptotic process"/>
    <property type="evidence" value="ECO:0000318"/>
    <property type="project" value="GO_Central"/>
</dbReference>
<dbReference type="GO" id="GO:0012501">
    <property type="term" value="P:programmed cell death"/>
    <property type="evidence" value="ECO:0000318"/>
    <property type="project" value="GO_Central"/>
</dbReference>
<dbReference type="GO" id="GO:0006508">
    <property type="term" value="P:proteolysis"/>
    <property type="evidence" value="ECO:0000318"/>
    <property type="project" value="GO_Central"/>
</dbReference>
<dbReference type="GO" id="GO:0040036">
    <property type="term" value="P:regulation of fibroblast growth factor receptor signaling pathway"/>
    <property type="evidence" value="ECO:0000315"/>
    <property type="project" value="ZFIN"/>
</dbReference>
<dbReference type="CDD" id="cd06785">
    <property type="entry name" value="cpPDZ_HtrA-like"/>
    <property type="match status" value="1"/>
</dbReference>
<dbReference type="CDD" id="cd00104">
    <property type="entry name" value="KAZAL_FS"/>
    <property type="match status" value="1"/>
</dbReference>
<dbReference type="FunFam" id="2.40.10.120:FF:000002">
    <property type="entry name" value="HtrA serine peptidase 3"/>
    <property type="match status" value="1"/>
</dbReference>
<dbReference type="FunFam" id="4.10.40.20:FF:000004">
    <property type="entry name" value="HtrA serine peptidase 3"/>
    <property type="match status" value="1"/>
</dbReference>
<dbReference type="FunFam" id="3.30.60.30:FF:000026">
    <property type="entry name" value="Insulin-like growth factor-binding protein 7"/>
    <property type="match status" value="1"/>
</dbReference>
<dbReference type="FunFam" id="2.30.42.10:FF:000142">
    <property type="entry name" value="Serine protease HTRA1"/>
    <property type="match status" value="1"/>
</dbReference>
<dbReference type="Gene3D" id="2.30.42.10">
    <property type="match status" value="1"/>
</dbReference>
<dbReference type="Gene3D" id="2.40.10.120">
    <property type="match status" value="1"/>
</dbReference>
<dbReference type="Gene3D" id="3.30.60.30">
    <property type="match status" value="1"/>
</dbReference>
<dbReference type="Gene3D" id="4.10.40.20">
    <property type="match status" value="1"/>
</dbReference>
<dbReference type="InterPro" id="IPR009030">
    <property type="entry name" value="Growth_fac_rcpt_cys_sf"/>
</dbReference>
<dbReference type="InterPro" id="IPR000867">
    <property type="entry name" value="IGFBP-like"/>
</dbReference>
<dbReference type="InterPro" id="IPR002350">
    <property type="entry name" value="Kazal_dom"/>
</dbReference>
<dbReference type="InterPro" id="IPR036058">
    <property type="entry name" value="Kazal_dom_sf"/>
</dbReference>
<dbReference type="InterPro" id="IPR001478">
    <property type="entry name" value="PDZ"/>
</dbReference>
<dbReference type="InterPro" id="IPR036034">
    <property type="entry name" value="PDZ_sf"/>
</dbReference>
<dbReference type="InterPro" id="IPR009003">
    <property type="entry name" value="Peptidase_S1_PA"/>
</dbReference>
<dbReference type="InterPro" id="IPR001940">
    <property type="entry name" value="Peptidase_S1C"/>
</dbReference>
<dbReference type="PANTHER" id="PTHR22939">
    <property type="entry name" value="SERINE PROTEASE FAMILY S1C HTRA-RELATED"/>
    <property type="match status" value="1"/>
</dbReference>
<dbReference type="PANTHER" id="PTHR22939:SF128">
    <property type="entry name" value="SERINE PROTEASE HTRA1A"/>
    <property type="match status" value="1"/>
</dbReference>
<dbReference type="Pfam" id="PF00219">
    <property type="entry name" value="IGFBP"/>
    <property type="match status" value="1"/>
</dbReference>
<dbReference type="Pfam" id="PF07648">
    <property type="entry name" value="Kazal_2"/>
    <property type="match status" value="1"/>
</dbReference>
<dbReference type="Pfam" id="PF00595">
    <property type="entry name" value="PDZ"/>
    <property type="match status" value="1"/>
</dbReference>
<dbReference type="Pfam" id="PF13365">
    <property type="entry name" value="Trypsin_2"/>
    <property type="match status" value="1"/>
</dbReference>
<dbReference type="PRINTS" id="PR00834">
    <property type="entry name" value="PROTEASES2C"/>
</dbReference>
<dbReference type="SMART" id="SM00121">
    <property type="entry name" value="IB"/>
    <property type="match status" value="1"/>
</dbReference>
<dbReference type="SMART" id="SM00280">
    <property type="entry name" value="KAZAL"/>
    <property type="match status" value="1"/>
</dbReference>
<dbReference type="SMART" id="SM00228">
    <property type="entry name" value="PDZ"/>
    <property type="match status" value="1"/>
</dbReference>
<dbReference type="SUPFAM" id="SSF57184">
    <property type="entry name" value="Growth factor receptor domain"/>
    <property type="match status" value="1"/>
</dbReference>
<dbReference type="SUPFAM" id="SSF100895">
    <property type="entry name" value="Kazal-type serine protease inhibitors"/>
    <property type="match status" value="1"/>
</dbReference>
<dbReference type="SUPFAM" id="SSF50156">
    <property type="entry name" value="PDZ domain-like"/>
    <property type="match status" value="1"/>
</dbReference>
<dbReference type="SUPFAM" id="SSF50494">
    <property type="entry name" value="Trypsin-like serine proteases"/>
    <property type="match status" value="1"/>
</dbReference>
<dbReference type="PROSITE" id="PS51323">
    <property type="entry name" value="IGFBP_N_2"/>
    <property type="match status" value="1"/>
</dbReference>
<dbReference type="PROSITE" id="PS51465">
    <property type="entry name" value="KAZAL_2"/>
    <property type="match status" value="1"/>
</dbReference>
<dbReference type="PROSITE" id="PS50106">
    <property type="entry name" value="PDZ"/>
    <property type="match status" value="1"/>
</dbReference>
<accession>Q6GMI0</accession>
<proteinExistence type="evidence at transcript level"/>
<sequence length="479" mass="51441">MILVTLFCICALVTSLQADARLSKRYVIGGCPSHCDKSMCPTMPKDCSTGQVMDHCNCCLVCASGEGEACGGVGKLGDPVCGESLECSVTGGVSYSATVRRRGKQGVCVCKSSDPVCGSDGVSYRDICELKRVSNRAQSLQQPPVLFIQRGACGTSLHDNPNSLRYKYNFIADVVEKIAPAVVHIELYRKMVYSKREMAVASGSGFVVSDDGLIVTNAHVVANKNRVKVELKNGASYDAKIKDVDEKADIALIKIDLPNKLPVLLLGRSADLRPGEFVVAIGSPFSLQNTVTTGIVSTTQRGGKELGLRNSDMDYIQTDAIINYGNSGGPLVNLDGEVIGINTLKVTAGISFAIPSDKIRQFLAESYDRLARGRGTTKKRYIGVRMMTLTPSLSKELKGRLRDFPDITSGAYVIEVISKTPAAAGGLKEHDVIISINGQRISTATDVSAIIKKESSLRVVVRRGNEDIILTIIPMEIDP</sequence>
<feature type="signal peptide" evidence="3">
    <location>
        <begin position="1"/>
        <end position="18"/>
    </location>
</feature>
<feature type="chain" id="PRO_0000416252" description="Serine protease HTRA1A">
    <location>
        <begin position="19"/>
        <end position="479"/>
    </location>
</feature>
<feature type="domain" description="IGFBP N-terminal" evidence="5">
    <location>
        <begin position="27"/>
        <end position="111"/>
    </location>
</feature>
<feature type="domain" description="Kazal-like" evidence="6">
    <location>
        <begin position="96"/>
        <end position="155"/>
    </location>
</feature>
<feature type="domain" description="PDZ" evidence="4">
    <location>
        <begin position="364"/>
        <end position="466"/>
    </location>
</feature>
<feature type="region of interest" description="Serine protease">
    <location>
        <begin position="203"/>
        <end position="363"/>
    </location>
</feature>
<feature type="active site" description="Charge relay system" evidence="2">
    <location>
        <position position="219"/>
    </location>
</feature>
<feature type="active site" description="Charge relay system" evidence="2">
    <location>
        <position position="249"/>
    </location>
</feature>
<feature type="active site" description="Charge relay system" evidence="2">
    <location>
        <position position="327"/>
    </location>
</feature>
<feature type="site" description="Involved in trimer stabilization" evidence="2">
    <location>
        <position position="168"/>
    </location>
</feature>
<feature type="site" description="Involved in trimer stabilization" evidence="2">
    <location>
        <position position="170"/>
    </location>
</feature>
<feature type="site" description="Involved in trimer stabilization" evidence="2">
    <location>
        <position position="277"/>
    </location>
</feature>
<feature type="disulfide bond" evidence="5">
    <location>
        <begin position="31"/>
        <end position="56"/>
    </location>
</feature>
<feature type="disulfide bond" evidence="5">
    <location>
        <begin position="35"/>
        <end position="58"/>
    </location>
</feature>
<feature type="disulfide bond" evidence="5">
    <location>
        <begin position="40"/>
        <end position="59"/>
    </location>
</feature>
<feature type="disulfide bond" evidence="5">
    <location>
        <begin position="47"/>
        <end position="62"/>
    </location>
</feature>
<feature type="disulfide bond" evidence="5">
    <location>
        <begin position="70"/>
        <end position="87"/>
    </location>
</feature>
<feature type="disulfide bond" evidence="5">
    <location>
        <begin position="81"/>
        <end position="108"/>
    </location>
</feature>